<dbReference type="EC" id="1.2.4.2" evidence="1"/>
<dbReference type="EMBL" id="AJ235270">
    <property type="protein sequence ID" value="CAA14647.1"/>
    <property type="molecule type" value="Genomic_DNA"/>
</dbReference>
<dbReference type="PIR" id="H71728">
    <property type="entry name" value="H71728"/>
</dbReference>
<dbReference type="RefSeq" id="NP_220570.1">
    <property type="nucleotide sequence ID" value="NC_000963.1"/>
</dbReference>
<dbReference type="RefSeq" id="WP_004598613.1">
    <property type="nucleotide sequence ID" value="NC_000963.1"/>
</dbReference>
<dbReference type="SMR" id="Q9ZDY3"/>
<dbReference type="STRING" id="272947.gene:17555263"/>
<dbReference type="EnsemblBacteria" id="CAA14647">
    <property type="protein sequence ID" value="CAA14647"/>
    <property type="gene ID" value="CAA14647"/>
</dbReference>
<dbReference type="KEGG" id="rpr:RP180"/>
<dbReference type="PATRIC" id="fig|272947.5.peg.185"/>
<dbReference type="eggNOG" id="COG0567">
    <property type="taxonomic scope" value="Bacteria"/>
</dbReference>
<dbReference type="HOGENOM" id="CLU_004709_1_0_5"/>
<dbReference type="OrthoDB" id="9759785at2"/>
<dbReference type="Proteomes" id="UP000002480">
    <property type="component" value="Chromosome"/>
</dbReference>
<dbReference type="GO" id="GO:0005829">
    <property type="term" value="C:cytosol"/>
    <property type="evidence" value="ECO:0007669"/>
    <property type="project" value="TreeGrafter"/>
</dbReference>
<dbReference type="GO" id="GO:0045252">
    <property type="term" value="C:oxoglutarate dehydrogenase complex"/>
    <property type="evidence" value="ECO:0007669"/>
    <property type="project" value="TreeGrafter"/>
</dbReference>
<dbReference type="GO" id="GO:0004591">
    <property type="term" value="F:oxoglutarate dehydrogenase (succinyl-transferring) activity"/>
    <property type="evidence" value="ECO:0007669"/>
    <property type="project" value="UniProtKB-EC"/>
</dbReference>
<dbReference type="GO" id="GO:0030976">
    <property type="term" value="F:thiamine pyrophosphate binding"/>
    <property type="evidence" value="ECO:0007669"/>
    <property type="project" value="InterPro"/>
</dbReference>
<dbReference type="GO" id="GO:0006096">
    <property type="term" value="P:glycolytic process"/>
    <property type="evidence" value="ECO:0007669"/>
    <property type="project" value="UniProtKB-KW"/>
</dbReference>
<dbReference type="GO" id="GO:0006099">
    <property type="term" value="P:tricarboxylic acid cycle"/>
    <property type="evidence" value="ECO:0007669"/>
    <property type="project" value="TreeGrafter"/>
</dbReference>
<dbReference type="CDD" id="cd02016">
    <property type="entry name" value="TPP_E1_OGDC_like"/>
    <property type="match status" value="1"/>
</dbReference>
<dbReference type="Gene3D" id="3.40.50.12470">
    <property type="match status" value="1"/>
</dbReference>
<dbReference type="Gene3D" id="3.40.50.970">
    <property type="match status" value="1"/>
</dbReference>
<dbReference type="Gene3D" id="3.40.50.11610">
    <property type="entry name" value="Multifunctional 2-oxoglutarate metabolism enzyme, C-terminal domain"/>
    <property type="match status" value="1"/>
</dbReference>
<dbReference type="Gene3D" id="1.10.287.1150">
    <property type="entry name" value="TPP helical domain"/>
    <property type="match status" value="1"/>
</dbReference>
<dbReference type="InterPro" id="IPR032106">
    <property type="entry name" value="2-oxogl_dehyd_N"/>
</dbReference>
<dbReference type="InterPro" id="IPR011603">
    <property type="entry name" value="2oxoglutarate_DH_E1"/>
</dbReference>
<dbReference type="InterPro" id="IPR001017">
    <property type="entry name" value="DH_E1"/>
</dbReference>
<dbReference type="InterPro" id="IPR042179">
    <property type="entry name" value="KGD_C_sf"/>
</dbReference>
<dbReference type="InterPro" id="IPR031717">
    <property type="entry name" value="ODO-1/KGD_C"/>
</dbReference>
<dbReference type="InterPro" id="IPR029061">
    <property type="entry name" value="THDP-binding"/>
</dbReference>
<dbReference type="InterPro" id="IPR005475">
    <property type="entry name" value="Transketolase-like_Pyr-bd"/>
</dbReference>
<dbReference type="NCBIfam" id="TIGR00239">
    <property type="entry name" value="2oxo_dh_E1"/>
    <property type="match status" value="1"/>
</dbReference>
<dbReference type="NCBIfam" id="NF006914">
    <property type="entry name" value="PRK09404.1"/>
    <property type="match status" value="1"/>
</dbReference>
<dbReference type="NCBIfam" id="NF008907">
    <property type="entry name" value="PRK12270.1"/>
    <property type="match status" value="1"/>
</dbReference>
<dbReference type="PANTHER" id="PTHR23152:SF4">
    <property type="entry name" value="2-OXOADIPATE DEHYDROGENASE COMPLEX COMPONENT E1"/>
    <property type="match status" value="1"/>
</dbReference>
<dbReference type="PANTHER" id="PTHR23152">
    <property type="entry name" value="2-OXOGLUTARATE DEHYDROGENASE"/>
    <property type="match status" value="1"/>
</dbReference>
<dbReference type="Pfam" id="PF16078">
    <property type="entry name" value="2-oxogl_dehyd_N"/>
    <property type="match status" value="1"/>
</dbReference>
<dbReference type="Pfam" id="PF00676">
    <property type="entry name" value="E1_dh"/>
    <property type="match status" value="1"/>
</dbReference>
<dbReference type="Pfam" id="PF16870">
    <property type="entry name" value="OxoGdeHyase_C"/>
    <property type="match status" value="1"/>
</dbReference>
<dbReference type="Pfam" id="PF02779">
    <property type="entry name" value="Transket_pyr"/>
    <property type="match status" value="1"/>
</dbReference>
<dbReference type="PIRSF" id="PIRSF000157">
    <property type="entry name" value="Oxoglu_dh_E1"/>
    <property type="match status" value="1"/>
</dbReference>
<dbReference type="SMART" id="SM00861">
    <property type="entry name" value="Transket_pyr"/>
    <property type="match status" value="1"/>
</dbReference>
<dbReference type="SUPFAM" id="SSF52518">
    <property type="entry name" value="Thiamin diphosphate-binding fold (THDP-binding)"/>
    <property type="match status" value="2"/>
</dbReference>
<reference key="1">
    <citation type="journal article" date="1998" name="Nature">
        <title>The genome sequence of Rickettsia prowazekii and the origin of mitochondria.</title>
        <authorList>
            <person name="Andersson S.G.E."/>
            <person name="Zomorodipour A."/>
            <person name="Andersson J.O."/>
            <person name="Sicheritz-Ponten T."/>
            <person name="Alsmark U.C.M."/>
            <person name="Podowski R.M."/>
            <person name="Naeslund A.K."/>
            <person name="Eriksson A.-S."/>
            <person name="Winkler H.H."/>
            <person name="Kurland C.G."/>
        </authorList>
    </citation>
    <scope>NUCLEOTIDE SEQUENCE [LARGE SCALE GENOMIC DNA]</scope>
    <source>
        <strain>Madrid E</strain>
    </source>
</reference>
<feature type="chain" id="PRO_0000162196" description="2-oxoglutarate dehydrogenase E1 component">
    <location>
        <begin position="1"/>
        <end position="936"/>
    </location>
</feature>
<comment type="function">
    <text evidence="1">E1 component of the 2-oxoglutarate dehydrogenase (OGDH) complex which catalyzes the decarboxylation of 2-oxoglutarate, the first step in the conversion of 2-oxoglutarate to succinyl-CoA and CO(2).</text>
</comment>
<comment type="catalytic activity">
    <reaction evidence="1">
        <text>N(6)-[(R)-lipoyl]-L-lysyl-[protein] + 2-oxoglutarate + H(+) = N(6)-[(R)-S(8)-succinyldihydrolipoyl]-L-lysyl-[protein] + CO2</text>
        <dbReference type="Rhea" id="RHEA:12188"/>
        <dbReference type="Rhea" id="RHEA-COMP:10474"/>
        <dbReference type="Rhea" id="RHEA-COMP:20092"/>
        <dbReference type="ChEBI" id="CHEBI:15378"/>
        <dbReference type="ChEBI" id="CHEBI:16526"/>
        <dbReference type="ChEBI" id="CHEBI:16810"/>
        <dbReference type="ChEBI" id="CHEBI:83099"/>
        <dbReference type="ChEBI" id="CHEBI:83120"/>
        <dbReference type="EC" id="1.2.4.2"/>
    </reaction>
</comment>
<comment type="cofactor">
    <cofactor evidence="1">
        <name>thiamine diphosphate</name>
        <dbReference type="ChEBI" id="CHEBI:58937"/>
    </cofactor>
</comment>
<comment type="subunit">
    <text evidence="1">Homodimer. Part of the 2-oxoglutarate dehydrogenase (OGDH) complex composed of E1 (2-oxoglutarate dehydrogenase), E2 (dihydrolipoamide succinyltransferase) and E3 (dihydrolipoamide dehydrogenase); the complex contains multiple copies of the three enzymatic components (E1, E2 and E3).</text>
</comment>
<comment type="similarity">
    <text evidence="2">Belongs to the alpha-ketoglutarate dehydrogenase family.</text>
</comment>
<protein>
    <recommendedName>
        <fullName>2-oxoglutarate dehydrogenase E1 component</fullName>
        <ecNumber evidence="1">1.2.4.2</ecNumber>
    </recommendedName>
    <alternativeName>
        <fullName>Alpha-ketoglutarate dehydrogenase</fullName>
    </alternativeName>
</protein>
<accession>Q9ZDY3</accession>
<proteinExistence type="inferred from homology"/>
<gene>
    <name type="primary">sucA</name>
    <name type="ordered locus">RP180</name>
</gene>
<sequence length="936" mass="105796">MEEYFNKTGYLFSGNAVFVEELYRQYLANPNSVDQTWQEFFADIKDNNVVLNKSTAKVISTNVTNKELLNNNLSSETLNNLKAKEMISAYRRNAHYLANLDPLGLEIRKTKNDLKLNIEAFGLDSSQLGENINIMDEFIGTWNCKLSELVTKLDKVYTSSIGVEFDQIENVEEKNWLYTKLETDITFTSEEKKSILNDLVEVECFEQFLHIKFPGAKRFSIEGGDASIVAMNKAIDLSMHQGVEEIVIGMAHRGRLNTLTKVVGKPYKEVIASFINGNIFPDGLNVSGDVKYHLGYSADRVRANQKIHLSLADNPSHLEAINSIVAGKVRAKQDIFVDTKRSKIKAILVHGDAAFCGQGVVAESLSMSPLTAYNVGGILHFVINNQLGFTANAADTRASRYSTEFAKIISAPILHVNGDDIEAVLKATDIAVEYRQKFSKDVVVEIICYRKYGHNEGDEPMYTQSKMYNIIKSKPTPGSIYANELVKNGIIDNNYYAKLKEKFKIRLDQEYEQAKSYKQETHFFEGYWKGISRIRGKDAITGVNKKILQDLGTKLCEIPKDFAINPKLIRLFEVRKTTLTTDQPIDWATAEQLAFAHLLCSGINIRLTGQDSARGTFSHRHSILHNQIDDTTYIPLNNLSKTQAKYEVANSNLSEYAALGFEYGYSLANPKNLVLWEAQFGDFANGAQIIFDQFISSSATKWLRMSGLVVLLPHAFEGQGPEHSSARLERFLQLAAEENMYITYPTTPASIFHLLRRQILESTRKPLIVMSPKSLLRHKYAVSKLDELGENTTFIPILDEVTKIDTNNVTKVILCSGKVYYDLFAMRTNNSNIVIIRLEQLYPFEKKLVASLLKKYNKAQAFIWCQEEPKNMGAWHYIATHLNDALKEAEINNEFKYVGREESASPAVGSLQVHNKQQEKLLMEALGDDIIKEKLY</sequence>
<keyword id="KW-0324">Glycolysis</keyword>
<keyword id="KW-0560">Oxidoreductase</keyword>
<keyword id="KW-1185">Reference proteome</keyword>
<keyword id="KW-0786">Thiamine pyrophosphate</keyword>
<name>ODO1_RICPR</name>
<evidence type="ECO:0000250" key="1">
    <source>
        <dbReference type="UniProtKB" id="P0AFG3"/>
    </source>
</evidence>
<evidence type="ECO:0000305" key="2"/>
<organism>
    <name type="scientific">Rickettsia prowazekii (strain Madrid E)</name>
    <dbReference type="NCBI Taxonomy" id="272947"/>
    <lineage>
        <taxon>Bacteria</taxon>
        <taxon>Pseudomonadati</taxon>
        <taxon>Pseudomonadota</taxon>
        <taxon>Alphaproteobacteria</taxon>
        <taxon>Rickettsiales</taxon>
        <taxon>Rickettsiaceae</taxon>
        <taxon>Rickettsieae</taxon>
        <taxon>Rickettsia</taxon>
        <taxon>typhus group</taxon>
    </lineage>
</organism>